<feature type="signal peptide" evidence="1">
    <location>
        <begin position="1"/>
        <end position="20"/>
    </location>
</feature>
<feature type="chain" id="PRO_5000314101" description="UPF0319 protein YccT">
    <location>
        <begin position="21"/>
        <end position="220"/>
    </location>
</feature>
<comment type="similarity">
    <text evidence="1">Belongs to the UPF0319 family.</text>
</comment>
<proteinExistence type="inferred from homology"/>
<protein>
    <recommendedName>
        <fullName evidence="1">UPF0319 protein YccT</fullName>
    </recommendedName>
</protein>
<name>YCCT_ECOLC</name>
<organism>
    <name type="scientific">Escherichia coli (strain ATCC 8739 / DSM 1576 / NBRC 3972 / NCIMB 8545 / WDCM 00012 / Crooks)</name>
    <dbReference type="NCBI Taxonomy" id="481805"/>
    <lineage>
        <taxon>Bacteria</taxon>
        <taxon>Pseudomonadati</taxon>
        <taxon>Pseudomonadota</taxon>
        <taxon>Gammaproteobacteria</taxon>
        <taxon>Enterobacterales</taxon>
        <taxon>Enterobacteriaceae</taxon>
        <taxon>Escherichia</taxon>
    </lineage>
</organism>
<accession>B1IVW8</accession>
<reference key="1">
    <citation type="submission" date="2008-02" db="EMBL/GenBank/DDBJ databases">
        <title>Complete sequence of Escherichia coli C str. ATCC 8739.</title>
        <authorList>
            <person name="Copeland A."/>
            <person name="Lucas S."/>
            <person name="Lapidus A."/>
            <person name="Glavina del Rio T."/>
            <person name="Dalin E."/>
            <person name="Tice H."/>
            <person name="Bruce D."/>
            <person name="Goodwin L."/>
            <person name="Pitluck S."/>
            <person name="Kiss H."/>
            <person name="Brettin T."/>
            <person name="Detter J.C."/>
            <person name="Han C."/>
            <person name="Kuske C.R."/>
            <person name="Schmutz J."/>
            <person name="Larimer F."/>
            <person name="Land M."/>
            <person name="Hauser L."/>
            <person name="Kyrpides N."/>
            <person name="Mikhailova N."/>
            <person name="Ingram L."/>
            <person name="Richardson P."/>
        </authorList>
    </citation>
    <scope>NUCLEOTIDE SEQUENCE [LARGE SCALE GENOMIC DNA]</scope>
    <source>
        <strain>ATCC 8739 / DSM 1576 / NBRC 3972 / NCIMB 8545 / WDCM 00012 / Crooks</strain>
    </source>
</reference>
<gene>
    <name evidence="1" type="primary">yccT</name>
    <name type="ordered locus">EcolC_2632</name>
</gene>
<sequence length="220" mass="24575">MKTGIVTTLIALCLPVSVFATTLRLSTDVDLLVLDGKKVSSSLLRGADSIELDNGPHQLVFRVEKTIHLSNSEERLYISPPLVVSFNTQLINQVNFRLPRLENEREANHFDAAPHLELLDGDATPIPVKLDILAITSTAKTIDYEVEVERYNKSAKRASLPQFATMMADDSTLLSGVSELDAIPPQSQVLTEQRLKYWFKLADPQTRNTFLQWAEKQPSS</sequence>
<evidence type="ECO:0000255" key="1">
    <source>
        <dbReference type="HAMAP-Rule" id="MF_00789"/>
    </source>
</evidence>
<dbReference type="EMBL" id="CP000946">
    <property type="protein sequence ID" value="ACA78262.1"/>
    <property type="molecule type" value="Genomic_DNA"/>
</dbReference>
<dbReference type="RefSeq" id="WP_000847785.1">
    <property type="nucleotide sequence ID" value="NZ_MTFT01000009.1"/>
</dbReference>
<dbReference type="KEGG" id="ecl:EcolC_2632"/>
<dbReference type="HOGENOM" id="CLU_073782_2_0_6"/>
<dbReference type="HAMAP" id="MF_00789">
    <property type="entry name" value="UPF0319"/>
    <property type="match status" value="1"/>
</dbReference>
<dbReference type="InterPro" id="IPR018635">
    <property type="entry name" value="UPF0319"/>
</dbReference>
<dbReference type="NCBIfam" id="NF047712">
    <property type="entry name" value="CrliSynInhib"/>
    <property type="match status" value="1"/>
</dbReference>
<dbReference type="NCBIfam" id="NF002967">
    <property type="entry name" value="PRK03641.1"/>
    <property type="match status" value="1"/>
</dbReference>
<dbReference type="PANTHER" id="PTHR38108">
    <property type="entry name" value="UPF0319 PROTEIN YCCT"/>
    <property type="match status" value="1"/>
</dbReference>
<dbReference type="PANTHER" id="PTHR38108:SF1">
    <property type="entry name" value="UPF0319 PROTEIN YCCT"/>
    <property type="match status" value="1"/>
</dbReference>
<dbReference type="Pfam" id="PF09829">
    <property type="entry name" value="DUF2057"/>
    <property type="match status" value="1"/>
</dbReference>
<keyword id="KW-0732">Signal</keyword>